<proteinExistence type="inferred from homology"/>
<comment type="function">
    <text evidence="1">The glycine cleavage system catalyzes the degradation of glycine. The H protein shuttles the methylamine group of glycine from the P protein to the T protein.</text>
</comment>
<comment type="cofactor">
    <cofactor evidence="1">
        <name>(R)-lipoate</name>
        <dbReference type="ChEBI" id="CHEBI:83088"/>
    </cofactor>
    <text evidence="1">Binds 1 lipoyl cofactor covalently.</text>
</comment>
<comment type="subunit">
    <text evidence="1">The glycine cleavage system is composed of four proteins: P, T, L and H.</text>
</comment>
<comment type="similarity">
    <text evidence="1">Belongs to the GcvH family.</text>
</comment>
<protein>
    <recommendedName>
        <fullName evidence="1">Glycine cleavage system H protein</fullName>
    </recommendedName>
</protein>
<name>GCSH_NOSS1</name>
<accession>Q8YNF8</accession>
<sequence length="130" mass="14398">MSSFEYPQDLRYLDTHEYVRLDGEIATIGITEFAVDQLGDVVFLELPDIGDLLTKGDTFGSIESVKAVENLNAPITGTVVERNEILVESPEAVADDPYGEGWFLKVRVNDPDEVNDALTADEYRAEVEGE</sequence>
<dbReference type="EMBL" id="BA000019">
    <property type="protein sequence ID" value="BAB76307.1"/>
    <property type="molecule type" value="Genomic_DNA"/>
</dbReference>
<dbReference type="PIR" id="AH2381">
    <property type="entry name" value="AH2381"/>
</dbReference>
<dbReference type="RefSeq" id="WP_010998739.1">
    <property type="nucleotide sequence ID" value="NZ_RSCN01000007.1"/>
</dbReference>
<dbReference type="SMR" id="Q8YNF8"/>
<dbReference type="STRING" id="103690.gene:10496658"/>
<dbReference type="KEGG" id="ana:all4608"/>
<dbReference type="eggNOG" id="COG0509">
    <property type="taxonomic scope" value="Bacteria"/>
</dbReference>
<dbReference type="OrthoDB" id="9796712at2"/>
<dbReference type="Proteomes" id="UP000002483">
    <property type="component" value="Chromosome"/>
</dbReference>
<dbReference type="GO" id="GO:0005829">
    <property type="term" value="C:cytosol"/>
    <property type="evidence" value="ECO:0007669"/>
    <property type="project" value="TreeGrafter"/>
</dbReference>
<dbReference type="GO" id="GO:0005960">
    <property type="term" value="C:glycine cleavage complex"/>
    <property type="evidence" value="ECO:0007669"/>
    <property type="project" value="InterPro"/>
</dbReference>
<dbReference type="GO" id="GO:0019464">
    <property type="term" value="P:glycine decarboxylation via glycine cleavage system"/>
    <property type="evidence" value="ECO:0007669"/>
    <property type="project" value="UniProtKB-UniRule"/>
</dbReference>
<dbReference type="CDD" id="cd06848">
    <property type="entry name" value="GCS_H"/>
    <property type="match status" value="1"/>
</dbReference>
<dbReference type="Gene3D" id="2.40.50.100">
    <property type="match status" value="1"/>
</dbReference>
<dbReference type="HAMAP" id="MF_00272">
    <property type="entry name" value="GcvH"/>
    <property type="match status" value="1"/>
</dbReference>
<dbReference type="InterPro" id="IPR003016">
    <property type="entry name" value="2-oxoA_DH_lipoyl-BS"/>
</dbReference>
<dbReference type="InterPro" id="IPR000089">
    <property type="entry name" value="Biotin_lipoyl"/>
</dbReference>
<dbReference type="InterPro" id="IPR002930">
    <property type="entry name" value="GCV_H"/>
</dbReference>
<dbReference type="InterPro" id="IPR033753">
    <property type="entry name" value="GCV_H/Fam206"/>
</dbReference>
<dbReference type="InterPro" id="IPR017453">
    <property type="entry name" value="GCV_H_sub"/>
</dbReference>
<dbReference type="InterPro" id="IPR011053">
    <property type="entry name" value="Single_hybrid_motif"/>
</dbReference>
<dbReference type="NCBIfam" id="TIGR00527">
    <property type="entry name" value="gcvH"/>
    <property type="match status" value="1"/>
</dbReference>
<dbReference type="NCBIfam" id="NF002270">
    <property type="entry name" value="PRK01202.1"/>
    <property type="match status" value="1"/>
</dbReference>
<dbReference type="PANTHER" id="PTHR11715">
    <property type="entry name" value="GLYCINE CLEAVAGE SYSTEM H PROTEIN"/>
    <property type="match status" value="1"/>
</dbReference>
<dbReference type="PANTHER" id="PTHR11715:SF3">
    <property type="entry name" value="GLYCINE CLEAVAGE SYSTEM H PROTEIN-RELATED"/>
    <property type="match status" value="1"/>
</dbReference>
<dbReference type="Pfam" id="PF01597">
    <property type="entry name" value="GCV_H"/>
    <property type="match status" value="1"/>
</dbReference>
<dbReference type="SUPFAM" id="SSF51230">
    <property type="entry name" value="Single hybrid motif"/>
    <property type="match status" value="1"/>
</dbReference>
<dbReference type="PROSITE" id="PS50968">
    <property type="entry name" value="BIOTINYL_LIPOYL"/>
    <property type="match status" value="1"/>
</dbReference>
<dbReference type="PROSITE" id="PS00189">
    <property type="entry name" value="LIPOYL"/>
    <property type="match status" value="1"/>
</dbReference>
<evidence type="ECO:0000255" key="1">
    <source>
        <dbReference type="HAMAP-Rule" id="MF_00272"/>
    </source>
</evidence>
<evidence type="ECO:0000255" key="2">
    <source>
        <dbReference type="PROSITE-ProRule" id="PRU01066"/>
    </source>
</evidence>
<feature type="chain" id="PRO_0000166196" description="Glycine cleavage system H protein">
    <location>
        <begin position="1"/>
        <end position="130"/>
    </location>
</feature>
<feature type="domain" description="Lipoyl-binding" evidence="2">
    <location>
        <begin position="25"/>
        <end position="107"/>
    </location>
</feature>
<feature type="modified residue" description="N6-lipoyllysine" evidence="1">
    <location>
        <position position="66"/>
    </location>
</feature>
<gene>
    <name evidence="1" type="primary">gcvH</name>
    <name type="ordered locus">all4608</name>
</gene>
<organism>
    <name type="scientific">Nostoc sp. (strain PCC 7120 / SAG 25.82 / UTEX 2576)</name>
    <dbReference type="NCBI Taxonomy" id="103690"/>
    <lineage>
        <taxon>Bacteria</taxon>
        <taxon>Bacillati</taxon>
        <taxon>Cyanobacteriota</taxon>
        <taxon>Cyanophyceae</taxon>
        <taxon>Nostocales</taxon>
        <taxon>Nostocaceae</taxon>
        <taxon>Nostoc</taxon>
    </lineage>
</organism>
<reference key="1">
    <citation type="journal article" date="2001" name="DNA Res.">
        <title>Complete genomic sequence of the filamentous nitrogen-fixing cyanobacterium Anabaena sp. strain PCC 7120.</title>
        <authorList>
            <person name="Kaneko T."/>
            <person name="Nakamura Y."/>
            <person name="Wolk C.P."/>
            <person name="Kuritz T."/>
            <person name="Sasamoto S."/>
            <person name="Watanabe A."/>
            <person name="Iriguchi M."/>
            <person name="Ishikawa A."/>
            <person name="Kawashima K."/>
            <person name="Kimura T."/>
            <person name="Kishida Y."/>
            <person name="Kohara M."/>
            <person name="Matsumoto M."/>
            <person name="Matsuno A."/>
            <person name="Muraki A."/>
            <person name="Nakazaki N."/>
            <person name="Shimpo S."/>
            <person name="Sugimoto M."/>
            <person name="Takazawa M."/>
            <person name="Yamada M."/>
            <person name="Yasuda M."/>
            <person name="Tabata S."/>
        </authorList>
    </citation>
    <scope>NUCLEOTIDE SEQUENCE [LARGE SCALE GENOMIC DNA]</scope>
    <source>
        <strain>PCC 7120 / SAG 25.82 / UTEX 2576</strain>
    </source>
</reference>
<keyword id="KW-0450">Lipoyl</keyword>
<keyword id="KW-1185">Reference proteome</keyword>